<evidence type="ECO:0000250" key="1">
    <source>
        <dbReference type="UniProtKB" id="P53954"/>
    </source>
</evidence>
<evidence type="ECO:0000255" key="2"/>
<evidence type="ECO:0000305" key="3"/>
<feature type="chain" id="PRO_0000080275" description="GDP-Man:Man(3)GlcNAc(2)-PP-Dol alpha-1,2-mannosyltransferase">
    <location>
        <begin position="1"/>
        <end position="616"/>
    </location>
</feature>
<feature type="topological domain" description="Lumenal" evidence="1">
    <location>
        <position position="1"/>
    </location>
</feature>
<feature type="transmembrane region" description="Helical" evidence="2">
    <location>
        <begin position="2"/>
        <end position="21"/>
    </location>
</feature>
<feature type="topological domain" description="Cytoplasmic" evidence="1">
    <location>
        <begin position="22"/>
        <end position="199"/>
    </location>
</feature>
<feature type="intramembrane region" description="Helical" evidence="2">
    <location>
        <begin position="200"/>
        <end position="220"/>
    </location>
</feature>
<feature type="topological domain" description="Cytoplasmic" evidence="1">
    <location>
        <begin position="221"/>
        <end position="460"/>
    </location>
</feature>
<feature type="intramembrane region" description="Helical" evidence="2">
    <location>
        <begin position="461"/>
        <end position="481"/>
    </location>
</feature>
<feature type="topological domain" description="Cytoplasmic" evidence="1">
    <location>
        <begin position="482"/>
        <end position="616"/>
    </location>
</feature>
<organism>
    <name type="scientific">Debaryomyces hansenii (strain ATCC 36239 / CBS 767 / BCRC 21394 / JCM 1990 / NBRC 0083 / IGC 2968)</name>
    <name type="common">Yeast</name>
    <name type="synonym">Torulaspora hansenii</name>
    <dbReference type="NCBI Taxonomy" id="284592"/>
    <lineage>
        <taxon>Eukaryota</taxon>
        <taxon>Fungi</taxon>
        <taxon>Dikarya</taxon>
        <taxon>Ascomycota</taxon>
        <taxon>Saccharomycotina</taxon>
        <taxon>Pichiomycetes</taxon>
        <taxon>Debaryomycetaceae</taxon>
        <taxon>Debaryomyces</taxon>
    </lineage>
</organism>
<dbReference type="EC" id="2.4.1.131" evidence="1"/>
<dbReference type="EMBL" id="CR382135">
    <property type="protein sequence ID" value="CAG85902.2"/>
    <property type="molecule type" value="Genomic_DNA"/>
</dbReference>
<dbReference type="RefSeq" id="XP_457857.2">
    <property type="nucleotide sequence ID" value="XM_457857.1"/>
</dbReference>
<dbReference type="FunCoup" id="Q6BVB2">
    <property type="interactions" value="432"/>
</dbReference>
<dbReference type="STRING" id="284592.Q6BVB2"/>
<dbReference type="CAZy" id="GT4">
    <property type="family name" value="Glycosyltransferase Family 4"/>
</dbReference>
<dbReference type="GlyCosmos" id="Q6BVB2">
    <property type="glycosylation" value="3 sites, No reported glycans"/>
</dbReference>
<dbReference type="GeneID" id="2900656"/>
<dbReference type="KEGG" id="dha:DEHA2C03982g"/>
<dbReference type="VEuPathDB" id="FungiDB:DEHA2C03982g"/>
<dbReference type="eggNOG" id="KOG1387">
    <property type="taxonomic scope" value="Eukaryota"/>
</dbReference>
<dbReference type="HOGENOM" id="CLU_017896_1_1_1"/>
<dbReference type="InParanoid" id="Q6BVB2"/>
<dbReference type="OMA" id="WKHFTLI"/>
<dbReference type="OrthoDB" id="2276068at2759"/>
<dbReference type="UniPathway" id="UPA00378"/>
<dbReference type="Proteomes" id="UP000000599">
    <property type="component" value="Chromosome C"/>
</dbReference>
<dbReference type="GO" id="GO:0005789">
    <property type="term" value="C:endoplasmic reticulum membrane"/>
    <property type="evidence" value="ECO:0007669"/>
    <property type="project" value="UniProtKB-SubCell"/>
</dbReference>
<dbReference type="GO" id="GO:0004377">
    <property type="term" value="F:GDP-Man:Man3GlcNAc2-PP-Dol alpha-1,2-mannosyltransferase activity"/>
    <property type="evidence" value="ECO:0007669"/>
    <property type="project" value="UniProtKB-EC"/>
</dbReference>
<dbReference type="GO" id="GO:0006488">
    <property type="term" value="P:dolichol-linked oligosaccharide biosynthetic process"/>
    <property type="evidence" value="ECO:0007669"/>
    <property type="project" value="EnsemblFungi"/>
</dbReference>
<dbReference type="CDD" id="cd03806">
    <property type="entry name" value="GT4_ALG11-like"/>
    <property type="match status" value="1"/>
</dbReference>
<dbReference type="Gene3D" id="3.40.50.2000">
    <property type="entry name" value="Glycogen Phosphorylase B"/>
    <property type="match status" value="1"/>
</dbReference>
<dbReference type="InterPro" id="IPR038013">
    <property type="entry name" value="ALG11"/>
</dbReference>
<dbReference type="InterPro" id="IPR031814">
    <property type="entry name" value="ALG11_N"/>
</dbReference>
<dbReference type="InterPro" id="IPR001296">
    <property type="entry name" value="Glyco_trans_1"/>
</dbReference>
<dbReference type="PANTHER" id="PTHR45919">
    <property type="entry name" value="GDP-MAN:MAN(3)GLCNAC(2)-PP-DOL ALPHA-1,2-MANNOSYLTRANSFERASE"/>
    <property type="match status" value="1"/>
</dbReference>
<dbReference type="PANTHER" id="PTHR45919:SF1">
    <property type="entry name" value="GDP-MAN:MAN(3)GLCNAC(2)-PP-DOL ALPHA-1,2-MANNOSYLTRANSFERASE"/>
    <property type="match status" value="1"/>
</dbReference>
<dbReference type="Pfam" id="PF15924">
    <property type="entry name" value="ALG11_N"/>
    <property type="match status" value="1"/>
</dbReference>
<dbReference type="Pfam" id="PF00534">
    <property type="entry name" value="Glycos_transf_1"/>
    <property type="match status" value="1"/>
</dbReference>
<dbReference type="SUPFAM" id="SSF53756">
    <property type="entry name" value="UDP-Glycosyltransferase/glycogen phosphorylase"/>
    <property type="match status" value="1"/>
</dbReference>
<sequence length="616" mass="70746">MGYLVVIGVIACVAYGILQVVSTVLPRLLLVPSQNWQDKIKKEIEQPMVRYLKVGNKRSSYRRRLVLASKQPSFYTNFVNNKIKVASVDSQNDEGEFLAEMKKRDVRDPQRKIIYGFFHPYANNGGGGERVLWQAVQATLATSDRNIVAIYTTNYESDPTSILDKVEAKFQISRLDEDRIVFVYLRKYARLIDGDYWKRFTLIGQLFGSMVLSWEAMFELSPDVWIDTIGLPGSYLLVSLVLKIPIMSYVHYPIIQPEMFNKLKFQGLSQIRVPKLSEIKTDVFSIGKLIYWSGVFYFYKYLGSLVNITLANGSWTFNHISNIWTINKDEAGYEMDILYPPCGTETLTKNVETLGSRENKLLFIAQFRPEKRHSLILRQYSKFLVNATSIGTPLKNIPTLVFLGSCRTPDDTKTLHDLKQEVDDLELNGYVEFVVDCSYEDIMVWLSKVKFGLNAMWNEHFGIGVVEYMSRGVIPLCHASAGPLLDIVTNWDNEPTSVSWYNNTGFFFKDKSDPDFDLSLQSDTASEFLQFSSRDNKDSTSTYPTLARLLDELFITNPDLISETRLQSMRENGVKSVLEKFSNGVFTLKWMQYSNQLGDLEKSYREERRSGIEKVY</sequence>
<name>ALG11_DEBHA</name>
<accession>Q6BVB2</accession>
<keyword id="KW-0256">Endoplasmic reticulum</keyword>
<keyword id="KW-0328">Glycosyltransferase</keyword>
<keyword id="KW-0472">Membrane</keyword>
<keyword id="KW-1185">Reference proteome</keyword>
<keyword id="KW-0808">Transferase</keyword>
<keyword id="KW-0812">Transmembrane</keyword>
<keyword id="KW-1133">Transmembrane helix</keyword>
<comment type="function">
    <text evidence="1">GDP-Man:Man(3)GlcNAc(2)-PP-Dol alpha-1,2-mannosyltransferase that operates in the biosynthetic pathway of dolichol-linked oligosaccharides, the glycan precursors employed in protein asparagine (N)-glycosylation. The assembly of dolichol-linked oligosaccharides begins on the cytosolic side of the endoplasmic reticulum membrane and finishes in its lumen. The sequential addition of sugars to dolichol pyrophosphate produces dolichol-linked oligosaccharides containing fourteen sugars, including two GlcNAcs, nine mannoses and three glucoses. Once assembled, the oligosaccharide is transferred from the lipid to nascent proteins by oligosaccharyltransferases. Catalyzes, on the cytoplasmic face of the endoplasmic reticulum, the addition of the fourth and fifth mannose residues to the dolichol-linked oligosaccharide chain, to produce Man(5)GlcNAc(2)-PP-dolichol core oligosaccharide.</text>
</comment>
<comment type="catalytic activity">
    <reaction evidence="1">
        <text>an alpha-D-Man-(1-&gt;3)-[alpha-D-Man-(1-&gt;6)]-beta-D-Man-(1-&gt;4)-beta-D-GlcNAc-(1-&gt;4)-alpha-D-GlcNAc-diphospho-di-trans,poly-cis-dolichol + 2 GDP-alpha-D-mannose = an alpha-D-Man-(1-&gt;2)-alpha-D-Man-(1-&gt;2)-alpha-D-Man-(1-&gt;3)-[alpha-D-Man-(1-&gt;6)]-beta-D-Man-(1-&gt;4)-beta-D-GlcNAc-(1-&gt;4)-alpha-D-GlcNAc-diphospho-di-trans,poly-cis-dolichol + 2 GDP + 2 H(+)</text>
        <dbReference type="Rhea" id="RHEA:29523"/>
        <dbReference type="Rhea" id="RHEA-COMP:19515"/>
        <dbReference type="Rhea" id="RHEA-COMP:19516"/>
        <dbReference type="ChEBI" id="CHEBI:15378"/>
        <dbReference type="ChEBI" id="CHEBI:57527"/>
        <dbReference type="ChEBI" id="CHEBI:58189"/>
        <dbReference type="ChEBI" id="CHEBI:132511"/>
        <dbReference type="ChEBI" id="CHEBI:132515"/>
        <dbReference type="EC" id="2.4.1.131"/>
    </reaction>
    <physiologicalReaction direction="left-to-right" evidence="1">
        <dbReference type="Rhea" id="RHEA:29524"/>
    </physiologicalReaction>
</comment>
<comment type="pathway">
    <text evidence="1">Protein modification; protein glycosylation.</text>
</comment>
<comment type="subcellular location">
    <subcellularLocation>
        <location evidence="1">Endoplasmic reticulum membrane</location>
        <topology evidence="1">Single-pass membrane protein</topology>
    </subcellularLocation>
</comment>
<comment type="similarity">
    <text evidence="3">Belongs to the glycosyltransferase group 1 family.</text>
</comment>
<proteinExistence type="inferred from homology"/>
<protein>
    <recommendedName>
        <fullName evidence="1">GDP-Man:Man(3)GlcNAc(2)-PP-Dol alpha-1,2-mannosyltransferase</fullName>
        <ecNumber evidence="1">2.4.1.131</ecNumber>
    </recommendedName>
    <alternativeName>
        <fullName>Alpha-1,2-mannosyltransferase ALG11</fullName>
    </alternativeName>
    <alternativeName>
        <fullName>Asparagine-linked glycosylation protein 11</fullName>
    </alternativeName>
    <alternativeName>
        <fullName>Glycolipid 2-alpha-mannosyltransferase</fullName>
    </alternativeName>
</protein>
<reference key="1">
    <citation type="journal article" date="2004" name="Nature">
        <title>Genome evolution in yeasts.</title>
        <authorList>
            <person name="Dujon B."/>
            <person name="Sherman D."/>
            <person name="Fischer G."/>
            <person name="Durrens P."/>
            <person name="Casaregola S."/>
            <person name="Lafontaine I."/>
            <person name="de Montigny J."/>
            <person name="Marck C."/>
            <person name="Neuveglise C."/>
            <person name="Talla E."/>
            <person name="Goffard N."/>
            <person name="Frangeul L."/>
            <person name="Aigle M."/>
            <person name="Anthouard V."/>
            <person name="Babour A."/>
            <person name="Barbe V."/>
            <person name="Barnay S."/>
            <person name="Blanchin S."/>
            <person name="Beckerich J.-M."/>
            <person name="Beyne E."/>
            <person name="Bleykasten C."/>
            <person name="Boisrame A."/>
            <person name="Boyer J."/>
            <person name="Cattolico L."/>
            <person name="Confanioleri F."/>
            <person name="de Daruvar A."/>
            <person name="Despons L."/>
            <person name="Fabre E."/>
            <person name="Fairhead C."/>
            <person name="Ferry-Dumazet H."/>
            <person name="Groppi A."/>
            <person name="Hantraye F."/>
            <person name="Hennequin C."/>
            <person name="Jauniaux N."/>
            <person name="Joyet P."/>
            <person name="Kachouri R."/>
            <person name="Kerrest A."/>
            <person name="Koszul R."/>
            <person name="Lemaire M."/>
            <person name="Lesur I."/>
            <person name="Ma L."/>
            <person name="Muller H."/>
            <person name="Nicaud J.-M."/>
            <person name="Nikolski M."/>
            <person name="Oztas S."/>
            <person name="Ozier-Kalogeropoulos O."/>
            <person name="Pellenz S."/>
            <person name="Potier S."/>
            <person name="Richard G.-F."/>
            <person name="Straub M.-L."/>
            <person name="Suleau A."/>
            <person name="Swennen D."/>
            <person name="Tekaia F."/>
            <person name="Wesolowski-Louvel M."/>
            <person name="Westhof E."/>
            <person name="Wirth B."/>
            <person name="Zeniou-Meyer M."/>
            <person name="Zivanovic Y."/>
            <person name="Bolotin-Fukuhara M."/>
            <person name="Thierry A."/>
            <person name="Bouchier C."/>
            <person name="Caudron B."/>
            <person name="Scarpelli C."/>
            <person name="Gaillardin C."/>
            <person name="Weissenbach J."/>
            <person name="Wincker P."/>
            <person name="Souciet J.-L."/>
        </authorList>
    </citation>
    <scope>NUCLEOTIDE SEQUENCE [LARGE SCALE GENOMIC DNA]</scope>
    <source>
        <strain>ATCC 36239 / CBS 767 / BCRC 21394 / JCM 1990 / NBRC 0083 / IGC 2968</strain>
    </source>
</reference>
<gene>
    <name type="primary">ALG11</name>
    <name type="ordered locus">DEHA2C03982g</name>
</gene>